<reference key="1">
    <citation type="journal article" date="2011" name="Science">
        <title>Comparative functional genomics of the fission yeasts.</title>
        <authorList>
            <person name="Rhind N."/>
            <person name="Chen Z."/>
            <person name="Yassour M."/>
            <person name="Thompson D.A."/>
            <person name="Haas B.J."/>
            <person name="Habib N."/>
            <person name="Wapinski I."/>
            <person name="Roy S."/>
            <person name="Lin M.F."/>
            <person name="Heiman D.I."/>
            <person name="Young S.K."/>
            <person name="Furuya K."/>
            <person name="Guo Y."/>
            <person name="Pidoux A."/>
            <person name="Chen H.M."/>
            <person name="Robbertse B."/>
            <person name="Goldberg J.M."/>
            <person name="Aoki K."/>
            <person name="Bayne E.H."/>
            <person name="Berlin A.M."/>
            <person name="Desjardins C.A."/>
            <person name="Dobbs E."/>
            <person name="Dukaj L."/>
            <person name="Fan L."/>
            <person name="FitzGerald M.G."/>
            <person name="French C."/>
            <person name="Gujja S."/>
            <person name="Hansen K."/>
            <person name="Keifenheim D."/>
            <person name="Levin J.Z."/>
            <person name="Mosher R.A."/>
            <person name="Mueller C.A."/>
            <person name="Pfiffner J."/>
            <person name="Priest M."/>
            <person name="Russ C."/>
            <person name="Smialowska A."/>
            <person name="Swoboda P."/>
            <person name="Sykes S.M."/>
            <person name="Vaughn M."/>
            <person name="Vengrova S."/>
            <person name="Yoder R."/>
            <person name="Zeng Q."/>
            <person name="Allshire R."/>
            <person name="Baulcombe D."/>
            <person name="Birren B.W."/>
            <person name="Brown W."/>
            <person name="Ekwall K."/>
            <person name="Kellis M."/>
            <person name="Leatherwood J."/>
            <person name="Levin H."/>
            <person name="Margalit H."/>
            <person name="Martienssen R."/>
            <person name="Nieduszynski C.A."/>
            <person name="Spatafora J.W."/>
            <person name="Friedman N."/>
            <person name="Dalgaard J.Z."/>
            <person name="Baumann P."/>
            <person name="Niki H."/>
            <person name="Regev A."/>
            <person name="Nusbaum C."/>
        </authorList>
    </citation>
    <scope>NUCLEOTIDE SEQUENCE [LARGE SCALE GENOMIC DNA]</scope>
    <source>
        <strain>yFS275 / FY16936</strain>
    </source>
</reference>
<proteinExistence type="inferred from homology"/>
<keyword id="KW-0325">Glycoprotein</keyword>
<keyword id="KW-0378">Hydrolase</keyword>
<keyword id="KW-0472">Membrane</keyword>
<keyword id="KW-0479">Metal-binding</keyword>
<keyword id="KW-0482">Metalloprotease</keyword>
<keyword id="KW-0645">Protease</keyword>
<keyword id="KW-1185">Reference proteome</keyword>
<keyword id="KW-0812">Transmembrane</keyword>
<keyword id="KW-1133">Transmembrane helix</keyword>
<keyword id="KW-0926">Vacuole</keyword>
<keyword id="KW-0862">Zinc</keyword>
<comment type="function">
    <text evidence="1">May be involved in vacuolar sorting and osmoregulation.</text>
</comment>
<comment type="cofactor">
    <cofactor evidence="2">
        <name>Zn(2+)</name>
        <dbReference type="ChEBI" id="CHEBI:29105"/>
    </cofactor>
    <text evidence="2">Binds 2 Zn(2+) ions per subunit.</text>
</comment>
<comment type="subcellular location">
    <subcellularLocation>
        <location evidence="1">Vacuole membrane</location>
        <topology evidence="3">Multi-pass membrane protein</topology>
    </subcellularLocation>
</comment>
<comment type="similarity">
    <text evidence="5">Belongs to the peptidase M28 family.</text>
</comment>
<dbReference type="EC" id="3.4.-.-" evidence="5"/>
<dbReference type="EMBL" id="KE651167">
    <property type="protein sequence ID" value="EEB07884.1"/>
    <property type="molecule type" value="Genomic_DNA"/>
</dbReference>
<dbReference type="RefSeq" id="XP_002174177.1">
    <property type="nucleotide sequence ID" value="XM_002174141.2"/>
</dbReference>
<dbReference type="SMR" id="B6K327"/>
<dbReference type="STRING" id="402676.B6K327"/>
<dbReference type="EnsemblFungi" id="EEB07884">
    <property type="protein sequence ID" value="EEB07884"/>
    <property type="gene ID" value="SJAG_03009"/>
</dbReference>
<dbReference type="GeneID" id="7051778"/>
<dbReference type="JaponicusDB" id="SJAG_03009">
    <property type="gene designation" value="erm2"/>
</dbReference>
<dbReference type="VEuPathDB" id="FungiDB:SJAG_03009"/>
<dbReference type="eggNOG" id="KOG2194">
    <property type="taxonomic scope" value="Eukaryota"/>
</dbReference>
<dbReference type="HOGENOM" id="CLU_006412_1_0_1"/>
<dbReference type="OMA" id="FCHTFVN"/>
<dbReference type="OrthoDB" id="10257471at2759"/>
<dbReference type="Proteomes" id="UP000001744">
    <property type="component" value="Unassembled WGS sequence"/>
</dbReference>
<dbReference type="GO" id="GO:0005774">
    <property type="term" value="C:vacuolar membrane"/>
    <property type="evidence" value="ECO:0007669"/>
    <property type="project" value="UniProtKB-SubCell"/>
</dbReference>
<dbReference type="GO" id="GO:0046872">
    <property type="term" value="F:metal ion binding"/>
    <property type="evidence" value="ECO:0007669"/>
    <property type="project" value="UniProtKB-KW"/>
</dbReference>
<dbReference type="GO" id="GO:0008235">
    <property type="term" value="F:metalloexopeptidase activity"/>
    <property type="evidence" value="ECO:0007669"/>
    <property type="project" value="InterPro"/>
</dbReference>
<dbReference type="GO" id="GO:0006508">
    <property type="term" value="P:proteolysis"/>
    <property type="evidence" value="ECO:0000318"/>
    <property type="project" value="GO_Central"/>
</dbReference>
<dbReference type="CDD" id="cd03875">
    <property type="entry name" value="M28_Fxna_like"/>
    <property type="match status" value="1"/>
</dbReference>
<dbReference type="Gene3D" id="3.40.630.10">
    <property type="entry name" value="Zn peptidases"/>
    <property type="match status" value="1"/>
</dbReference>
<dbReference type="InterPro" id="IPR048024">
    <property type="entry name" value="Fxna-like_M28_dom"/>
</dbReference>
<dbReference type="InterPro" id="IPR045175">
    <property type="entry name" value="M28_fam"/>
</dbReference>
<dbReference type="InterPro" id="IPR007484">
    <property type="entry name" value="Peptidase_M28"/>
</dbReference>
<dbReference type="InterPro" id="IPR053975">
    <property type="entry name" value="PFF1_C"/>
</dbReference>
<dbReference type="PANTHER" id="PTHR12147">
    <property type="entry name" value="METALLOPEPTIDASE M28 FAMILY MEMBER"/>
    <property type="match status" value="1"/>
</dbReference>
<dbReference type="PANTHER" id="PTHR12147:SF58">
    <property type="entry name" value="VACUOLAR MEMBRANE PROTEASE"/>
    <property type="match status" value="1"/>
</dbReference>
<dbReference type="Pfam" id="PF04389">
    <property type="entry name" value="Peptidase_M28"/>
    <property type="match status" value="1"/>
</dbReference>
<dbReference type="Pfam" id="PF22250">
    <property type="entry name" value="PFF1_C"/>
    <property type="match status" value="1"/>
</dbReference>
<dbReference type="SUPFAM" id="SSF53187">
    <property type="entry name" value="Zn-dependent exopeptidases"/>
    <property type="match status" value="1"/>
</dbReference>
<sequence>MQFGKSLLKHVYTRTFKSSLTCSIFAFTLLMIFFVLDWKRMNVYPRLDEIPGLNVLRAWDDLQEITKSPHPYNSHASDVVRNYILEELYKLKKQDEGNVEVIDDLSSTTTFIMPDTNIRSYFEGSNILVRFRGDNERLRPILLSSHFDSVSTGFGATDNGMGVASALELARYYAEHKPERDLIINFNNAEEDYLYGARAFTEHEWSKNVTAFLNLEGAGAGGKALLFRSTNNHVARSYFKSNRFAFASVLGIDAFKRGVIKSETDYVVYEKMNNGTAGLDLAFFRNRGIYHTERDDIQHTSIFSLNHMLVNAFISLRNLLDEKSQHFKGSSPLYFPVFGSYWQINLNLHLFLNVVFLIACPAILFMCLFRFPSLYAQLKKPCYLICFTLSSLFVLIFDYVVVQSLTKLNPYVIHSSPDAVLAFFFLTNLLGLVYSFRYVATHSRMSNEELSCIEIVLIWYVSMFWYISLLIATLTSIVRGLGSLYFVNFGFFCSFFCCILTLIRVRYFVDRMVTINRPANPEQMPLVQSTSGNAYGTSRYPQHRLKAVVSKSASVKLNDNLWSVLFFSCLVPLPLFTCYNLLSEVFIPAVHQSLIDGPYSNTCYKFAVILVFMAIINSSPFVFRALSKKSSAILLMLWVSLLFNILRAEPFNEKAPIKFRVFQHLNLDTSENLFHVQNIEPYTQKVLNDYPKIISDTSYQCVDRDCFYEAEEPTLGFDGPLQNAINITLHKSLNSSLAELRVDAFETKWCYFDFSVPVYVDSINGFEVQEEHQSLRLGVRNFGTPFVVKTVAKDEDSPTNVTVTCMWDEFDHDKIPSYTSLLNYIPAWSVLTKNSTGLLKMSKTHVM</sequence>
<name>PFF1_SCHJY</name>
<evidence type="ECO:0000250" key="1">
    <source>
        <dbReference type="UniProtKB" id="P38244"/>
    </source>
</evidence>
<evidence type="ECO:0000250" key="2">
    <source>
        <dbReference type="UniProtKB" id="P80561"/>
    </source>
</evidence>
<evidence type="ECO:0000255" key="3"/>
<evidence type="ECO:0000255" key="4">
    <source>
        <dbReference type="PROSITE-ProRule" id="PRU00498"/>
    </source>
</evidence>
<evidence type="ECO:0000305" key="5"/>
<protein>
    <recommendedName>
        <fullName evidence="1">Vacuolar membrane protease</fullName>
        <ecNumber evidence="5">3.4.-.-</ecNumber>
    </recommendedName>
    <alternativeName>
        <fullName evidence="1">FXNA-related family protease 1</fullName>
    </alternativeName>
</protein>
<gene>
    <name type="ORF">SJAG_03009</name>
</gene>
<organism>
    <name type="scientific">Schizosaccharomyces japonicus (strain yFS275 / FY16936)</name>
    <name type="common">Fission yeast</name>
    <dbReference type="NCBI Taxonomy" id="402676"/>
    <lineage>
        <taxon>Eukaryota</taxon>
        <taxon>Fungi</taxon>
        <taxon>Dikarya</taxon>
        <taxon>Ascomycota</taxon>
        <taxon>Taphrinomycotina</taxon>
        <taxon>Schizosaccharomycetes</taxon>
        <taxon>Schizosaccharomycetales</taxon>
        <taxon>Schizosaccharomycetaceae</taxon>
        <taxon>Schizosaccharomyces</taxon>
    </lineage>
</organism>
<feature type="chain" id="PRO_0000411741" description="Vacuolar membrane protease">
    <location>
        <begin position="1"/>
        <end position="847"/>
    </location>
</feature>
<feature type="topological domain" description="Cytoplasmic" evidence="1">
    <location>
        <begin position="1"/>
        <end position="17"/>
    </location>
</feature>
<feature type="transmembrane region" description="Helical; Name=1" evidence="3">
    <location>
        <begin position="18"/>
        <end position="38"/>
    </location>
</feature>
<feature type="topological domain" description="Vacuolar" evidence="1">
    <location>
        <begin position="39"/>
        <end position="348"/>
    </location>
</feature>
<feature type="transmembrane region" description="Helical; Name=2" evidence="3">
    <location>
        <begin position="349"/>
        <end position="369"/>
    </location>
</feature>
<feature type="topological domain" description="Cytoplasmic" evidence="1">
    <location>
        <begin position="370"/>
        <end position="381"/>
    </location>
</feature>
<feature type="transmembrane region" description="Helical; Name=3" evidence="3">
    <location>
        <begin position="382"/>
        <end position="402"/>
    </location>
</feature>
<feature type="topological domain" description="Vacuolar" evidence="1 5">
    <location>
        <begin position="403"/>
        <end position="415"/>
    </location>
</feature>
<feature type="transmembrane region" description="Helical; Name=4" evidence="3">
    <location>
        <begin position="416"/>
        <end position="436"/>
    </location>
</feature>
<feature type="topological domain" description="Cytoplasmic" evidence="1">
    <location>
        <begin position="437"/>
        <end position="454"/>
    </location>
</feature>
<feature type="transmembrane region" description="Helical; Name=5" evidence="3">
    <location>
        <begin position="455"/>
        <end position="475"/>
    </location>
</feature>
<feature type="topological domain" description="Vacuolar" evidence="1">
    <location>
        <begin position="476"/>
        <end position="482"/>
    </location>
</feature>
<feature type="transmembrane region" description="Helical; Name=6" evidence="3">
    <location>
        <begin position="483"/>
        <end position="503"/>
    </location>
</feature>
<feature type="topological domain" description="Cytoplasmic" evidence="1">
    <location>
        <begin position="504"/>
        <end position="560"/>
    </location>
</feature>
<feature type="transmembrane region" description="Helical; Name=7" evidence="3">
    <location>
        <begin position="561"/>
        <end position="581"/>
    </location>
</feature>
<feature type="topological domain" description="Vacuolar" evidence="1">
    <location>
        <begin position="582"/>
        <end position="605"/>
    </location>
</feature>
<feature type="transmembrane region" description="Helical; Name=8" evidence="3">
    <location>
        <begin position="606"/>
        <end position="626"/>
    </location>
</feature>
<feature type="topological domain" description="Cytoplasmic" evidence="1">
    <location>
        <begin position="627"/>
        <end position="630"/>
    </location>
</feature>
<feature type="transmembrane region" description="Helical; Name=9" evidence="3">
    <location>
        <begin position="631"/>
        <end position="651"/>
    </location>
</feature>
<feature type="topological domain" description="Vacuolar" evidence="1">
    <location>
        <begin position="652"/>
        <end position="847"/>
    </location>
</feature>
<feature type="active site" description="Proton acceptor" evidence="2">
    <location>
        <position position="190"/>
    </location>
</feature>
<feature type="binding site" evidence="2">
    <location>
        <position position="146"/>
    </location>
    <ligand>
        <name>Zn(2+)</name>
        <dbReference type="ChEBI" id="CHEBI:29105"/>
        <label>1</label>
        <note>catalytic</note>
    </ligand>
</feature>
<feature type="binding site" evidence="2">
    <location>
        <position position="158"/>
    </location>
    <ligand>
        <name>Zn(2+)</name>
        <dbReference type="ChEBI" id="CHEBI:29105"/>
        <label>1</label>
        <note>catalytic</note>
    </ligand>
</feature>
<feature type="binding site" evidence="2">
    <location>
        <position position="158"/>
    </location>
    <ligand>
        <name>Zn(2+)</name>
        <dbReference type="ChEBI" id="CHEBI:29105"/>
        <label>2</label>
        <note>catalytic</note>
    </ligand>
</feature>
<feature type="binding site" evidence="2">
    <location>
        <position position="191"/>
    </location>
    <ligand>
        <name>Zn(2+)</name>
        <dbReference type="ChEBI" id="CHEBI:29105"/>
        <label>2</label>
        <note>catalytic</note>
    </ligand>
</feature>
<feature type="binding site" evidence="2">
    <location>
        <position position="216"/>
    </location>
    <ligand>
        <name>Zn(2+)</name>
        <dbReference type="ChEBI" id="CHEBI:29105"/>
        <label>1</label>
        <note>catalytic</note>
    </ligand>
</feature>
<feature type="binding site" evidence="2">
    <location>
        <position position="291"/>
    </location>
    <ligand>
        <name>Zn(2+)</name>
        <dbReference type="ChEBI" id="CHEBI:29105"/>
        <label>2</label>
        <note>catalytic</note>
    </ligand>
</feature>
<feature type="site" description="Transition state stabilizer" evidence="2">
    <location>
        <position position="290"/>
    </location>
</feature>
<feature type="glycosylation site" description="N-linked (GlcNAc...) asparagine" evidence="4">
    <location>
        <position position="208"/>
    </location>
</feature>
<feature type="glycosylation site" description="N-linked (GlcNAc...) asparagine" evidence="4">
    <location>
        <position position="274"/>
    </location>
</feature>
<feature type="glycosylation site" description="N-linked (GlcNAc...) asparagine" evidence="4">
    <location>
        <position position="726"/>
    </location>
</feature>
<feature type="glycosylation site" description="N-linked (GlcNAc...) asparagine" evidence="4">
    <location>
        <position position="734"/>
    </location>
</feature>
<feature type="glycosylation site" description="N-linked (GlcNAc...) asparagine" evidence="4">
    <location>
        <position position="800"/>
    </location>
</feature>
<feature type="glycosylation site" description="N-linked (GlcNAc...) asparagine" evidence="4">
    <location>
        <position position="834"/>
    </location>
</feature>
<accession>B6K327</accession>